<organism>
    <name type="scientific">Xenopus tropicalis</name>
    <name type="common">Western clawed frog</name>
    <name type="synonym">Silurana tropicalis</name>
    <dbReference type="NCBI Taxonomy" id="8364"/>
    <lineage>
        <taxon>Eukaryota</taxon>
        <taxon>Metazoa</taxon>
        <taxon>Chordata</taxon>
        <taxon>Craniata</taxon>
        <taxon>Vertebrata</taxon>
        <taxon>Euteleostomi</taxon>
        <taxon>Amphibia</taxon>
        <taxon>Batrachia</taxon>
        <taxon>Anura</taxon>
        <taxon>Pipoidea</taxon>
        <taxon>Pipidae</taxon>
        <taxon>Xenopodinae</taxon>
        <taxon>Xenopus</taxon>
        <taxon>Silurana</taxon>
    </lineage>
</organism>
<feature type="chain" id="PRO_0000409247" description="Ciliogenesis and planar polarity effector 2">
    <location>
        <begin position="1"/>
        <end position="255"/>
    </location>
</feature>
<feature type="region of interest" description="Small GTPase-like">
    <location>
        <begin position="52"/>
        <end position="255"/>
    </location>
</feature>
<feature type="binding site" evidence="1">
    <location>
        <begin position="64"/>
        <end position="71"/>
    </location>
    <ligand>
        <name>GTP</name>
        <dbReference type="ChEBI" id="CHEBI:37565"/>
    </ligand>
</feature>
<feature type="binding site" evidence="1">
    <location>
        <begin position="177"/>
        <end position="180"/>
    </location>
    <ligand>
        <name>GTP</name>
        <dbReference type="ChEBI" id="CHEBI:37565"/>
    </ligand>
</feature>
<gene>
    <name type="primary">cplane2</name>
    <name evidence="2" type="synonym">rsg1</name>
</gene>
<name>CPLN2_XENTR</name>
<reference key="1">
    <citation type="submission" date="2008-11" db="EMBL/GenBank/DDBJ databases">
        <authorList>
            <consortium name="NIH - Xenopus Gene Collection (XGC) project"/>
        </authorList>
    </citation>
    <scope>NUCLEOTIDE SEQUENCE [LARGE SCALE MRNA]</scope>
    <source>
        <tissue>Gastrula</tissue>
    </source>
</reference>
<comment type="function">
    <text evidence="2">Potential effector of the planar cell polarity signaling pathway. Plays a role in targeted membrane trafficking most probably at the level of vesicle fusion with membranes. Involved in cilium biogenesis by regulating the transport of cargo proteins to the basal body and to the apical tips of cilia. More generally involved in exocytosis in secretory cells (By similarity).</text>
</comment>
<comment type="subcellular location">
    <subcellularLocation>
        <location evidence="2">Cytoplasm</location>
        <location evidence="2">Cytoskeleton</location>
        <location evidence="2">Cilium basal body</location>
    </subcellularLocation>
</comment>
<comment type="similarity">
    <text evidence="3">Belongs to the small GTPase superfamily. Rab family.</text>
</comment>
<sequence>MALAEAPRPGPLMDPEWHGSPEGKEYLGCILRKKKRKFFGLIERPVLSPQLPADIASYKLFVCGRSGAGKTSFIAKLAGLEVPSMHHETTGIQTTCVYWPVRPTHSARPVIFRFQFWDCGEGALRKFDHILPACKEMADAVLFLFSFTDRSSFEDVPALISRTLGQEEDVARVVIGTKLDQYTHTDVTENDLRDFQRTWQLPVMRVRSVNGPRVAEGRGLDGRVGLVECAPVLNGLAEILWRRDQVIAGLVGGAD</sequence>
<dbReference type="EMBL" id="BC170963">
    <property type="protein sequence ID" value="AAI70963.1"/>
    <property type="molecule type" value="mRNA"/>
</dbReference>
<dbReference type="SMR" id="B7ZTR0"/>
<dbReference type="FunCoup" id="B7ZTR0">
    <property type="interactions" value="237"/>
</dbReference>
<dbReference type="STRING" id="8364.ENSXETP00000011740"/>
<dbReference type="PaxDb" id="8364-ENSXETP00000029459"/>
<dbReference type="eggNOG" id="KOG0395">
    <property type="taxonomic scope" value="Eukaryota"/>
</dbReference>
<dbReference type="InParanoid" id="B7ZTR0"/>
<dbReference type="Proteomes" id="UP000008143">
    <property type="component" value="Unplaced"/>
</dbReference>
<dbReference type="GO" id="GO:0036064">
    <property type="term" value="C:ciliary basal body"/>
    <property type="evidence" value="ECO:0000250"/>
    <property type="project" value="UniProtKB"/>
</dbReference>
<dbReference type="GO" id="GO:0005737">
    <property type="term" value="C:cytoplasm"/>
    <property type="evidence" value="ECO:0007669"/>
    <property type="project" value="UniProtKB-KW"/>
</dbReference>
<dbReference type="GO" id="GO:0005525">
    <property type="term" value="F:GTP binding"/>
    <property type="evidence" value="ECO:0007669"/>
    <property type="project" value="UniProtKB-KW"/>
</dbReference>
<dbReference type="GO" id="GO:0003924">
    <property type="term" value="F:GTPase activity"/>
    <property type="evidence" value="ECO:0007669"/>
    <property type="project" value="InterPro"/>
</dbReference>
<dbReference type="GO" id="GO:0060271">
    <property type="term" value="P:cilium assembly"/>
    <property type="evidence" value="ECO:0000250"/>
    <property type="project" value="UniProtKB"/>
</dbReference>
<dbReference type="GO" id="GO:0006887">
    <property type="term" value="P:exocytosis"/>
    <property type="evidence" value="ECO:0007669"/>
    <property type="project" value="UniProtKB-KW"/>
</dbReference>
<dbReference type="GO" id="GO:0008104">
    <property type="term" value="P:protein localization"/>
    <property type="evidence" value="ECO:0000250"/>
    <property type="project" value="UniProtKB"/>
</dbReference>
<dbReference type="GO" id="GO:0015031">
    <property type="term" value="P:protein transport"/>
    <property type="evidence" value="ECO:0007669"/>
    <property type="project" value="UniProtKB-KW"/>
</dbReference>
<dbReference type="GO" id="GO:0017157">
    <property type="term" value="P:regulation of exocytosis"/>
    <property type="evidence" value="ECO:0000250"/>
    <property type="project" value="UniProtKB"/>
</dbReference>
<dbReference type="GO" id="GO:0031338">
    <property type="term" value="P:regulation of vesicle fusion"/>
    <property type="evidence" value="ECO:0000250"/>
    <property type="project" value="UniProtKB"/>
</dbReference>
<dbReference type="CDD" id="cd00882">
    <property type="entry name" value="Ras_like_GTPase"/>
    <property type="match status" value="1"/>
</dbReference>
<dbReference type="FunFam" id="3.40.50.300:FF:001043">
    <property type="entry name" value="ciliogenesis and planar polarity effector 2"/>
    <property type="match status" value="1"/>
</dbReference>
<dbReference type="Gene3D" id="3.40.50.300">
    <property type="entry name" value="P-loop containing nucleotide triphosphate hydrolases"/>
    <property type="match status" value="1"/>
</dbReference>
<dbReference type="InterPro" id="IPR027417">
    <property type="entry name" value="P-loop_NTPase"/>
</dbReference>
<dbReference type="InterPro" id="IPR039677">
    <property type="entry name" value="RSG1"/>
</dbReference>
<dbReference type="InterPro" id="IPR001806">
    <property type="entry name" value="Small_GTPase"/>
</dbReference>
<dbReference type="PANTHER" id="PTHR14983">
    <property type="entry name" value="CILIOGENESIS AND PLANAR POLARITY EFFECTOR 2"/>
    <property type="match status" value="1"/>
</dbReference>
<dbReference type="PANTHER" id="PTHR14983:SF1">
    <property type="entry name" value="CILIOGENESIS AND PLANAR POLARITY EFFECTOR 2"/>
    <property type="match status" value="1"/>
</dbReference>
<dbReference type="Pfam" id="PF00071">
    <property type="entry name" value="Ras"/>
    <property type="match status" value="1"/>
</dbReference>
<dbReference type="PRINTS" id="PR00449">
    <property type="entry name" value="RASTRNSFRMNG"/>
</dbReference>
<dbReference type="SUPFAM" id="SSF52540">
    <property type="entry name" value="P-loop containing nucleoside triphosphate hydrolases"/>
    <property type="match status" value="1"/>
</dbReference>
<evidence type="ECO:0000250" key="1"/>
<evidence type="ECO:0000250" key="2">
    <source>
        <dbReference type="UniProtKB" id="Q6GNL4"/>
    </source>
</evidence>
<evidence type="ECO:0000305" key="3"/>
<proteinExistence type="evidence at transcript level"/>
<keyword id="KW-0966">Cell projection</keyword>
<keyword id="KW-0969">Cilium</keyword>
<keyword id="KW-0970">Cilium biogenesis/degradation</keyword>
<keyword id="KW-0963">Cytoplasm</keyword>
<keyword id="KW-0206">Cytoskeleton</keyword>
<keyword id="KW-0268">Exocytosis</keyword>
<keyword id="KW-0342">GTP-binding</keyword>
<keyword id="KW-0547">Nucleotide-binding</keyword>
<keyword id="KW-0653">Protein transport</keyword>
<keyword id="KW-1185">Reference proteome</keyword>
<keyword id="KW-0813">Transport</keyword>
<protein>
    <recommendedName>
        <fullName evidence="3">Ciliogenesis and planar polarity effector 2</fullName>
    </recommendedName>
    <alternativeName>
        <fullName evidence="2">REM2- and Rab-like small GTPase 1</fullName>
    </alternativeName>
</protein>
<accession>B7ZTR0</accession>